<evidence type="ECO:0000250" key="1">
    <source>
        <dbReference type="UniProtKB" id="Q9HBM0"/>
    </source>
</evidence>
<evidence type="ECO:0000255" key="2"/>
<evidence type="ECO:0000256" key="3">
    <source>
        <dbReference type="SAM" id="MobiDB-lite"/>
    </source>
</evidence>
<evidence type="ECO:0000269" key="4">
    <source>
    </source>
</evidence>
<evidence type="ECO:0000269" key="5">
    <source>
    </source>
</evidence>
<evidence type="ECO:0000269" key="6">
    <source>
    </source>
</evidence>
<evidence type="ECO:0000269" key="7">
    <source>
    </source>
</evidence>
<evidence type="ECO:0000303" key="8">
    <source>
    </source>
</evidence>
<evidence type="ECO:0000303" key="9">
    <source>
    </source>
</evidence>
<evidence type="ECO:0000303" key="10">
    <source>
    </source>
</evidence>
<evidence type="ECO:0000305" key="11"/>
<evidence type="ECO:0000312" key="12">
    <source>
        <dbReference type="MGI" id="MGI:2143698"/>
    </source>
</evidence>
<sequence length="780" mass="87987">MTPEFDEEVVFENSPLYQYLQDLGHTDFEICSSSSPKPEKCLTTEGPQPPPTRVLQRQGILLKLTETIKSWTFSSQHSKKDDLLHKLDTGFRLDSLHTILQQEVLLQEDVELLELLDASILSAGQPQQESGHLPTLCSLATPNTWDVSLLFAFISLLIMFPTCWIVSSWLVWGIILFLYLIIRVLKLWRTAKLQMTLKKYRVRLEDMAANSRAFTNLVRKSLRLIQETEVISRGFTLVSAACSFNKAAQHPGQHLIGLRKAVYRTVRANFQAARLATLYMLKNYPLNSESDNVTNYICVVPFKELGLGLSEDQISEEEARNLTDGFSLPALKVLFQLWVAQSSEFFRRLALLLSTANSPSGPLLTAALLPHHILCDVTQGLPHAHSACLDELKRSYEFFRYFETQHQSVPQRLSKTPQKSRELSNVHTAVRSLQLHLKALLNEVIILEDELEKLVCTKETQELLSEAYPILEQKLKLIEPHVQASNSCWEEAISQVDKLLRRNTDKKGKPGVACENPHCTAEPLVRPALHIEDRDPIPEEQELEAYVDDIDIESEFRKDDFYHLSQEDRERQKREQEESRRVLQELKSVLGFKASEAERQKWKQLLFSDHAVLTSLSPVDPVESVSNSEPPMNSDTEKVNSNATEEETSKPCAGDKEDSRTEYVCDSPTEGPSKDTSADTGLLLPGAEETMCHQHESEAKSPQAAAAGATAPPTPRDTLQLSIKQRLARLQLPPEFTFSAGLAAEVAARSLSFTTMQEQTFGDEEEEQLVEGGENEVEEK</sequence>
<accession>Q3ZK22</accession>
<accession>A0M8X3</accession>
<accession>Q3ZK21</accession>
<accession>Q8BY12</accession>
<accession>Q8BYB4</accession>
<accession>Q8BZB5</accession>
<comment type="function">
    <text evidence="4 6">Plays a pivotal role in the establishment of adherens junctions and their maintenance in adult life. Required for morphogenesis of the preimplantation embryo, and for the implantation process.</text>
</comment>
<comment type="subunit">
    <text evidence="1 7">Interacts with USH2A (via the cytoplasmic region); the interaction associates VEZT with the USH2 complex at the stereocilia base (PubMed:17567809). Interacts with myosin MYO7A and the cadherin-catenins complex (By similarity).</text>
</comment>
<comment type="subcellular location">
    <subcellularLocation>
        <location evidence="4">Cell membrane</location>
        <topology evidence="11">Multi-pass membrane protein</topology>
    </subcellularLocation>
    <subcellularLocation>
        <location evidence="7">Cell projection</location>
        <location evidence="7">Stereocilium membrane</location>
    </subcellularLocation>
    <subcellularLocation>
        <location evidence="4">Cell junction</location>
        <location evidence="4">Adherens junction</location>
    </subcellularLocation>
    <subcellularLocation>
        <location evidence="4">Nucleus</location>
    </subcellularLocation>
    <subcellularLocation>
        <location evidence="5">Cytoplasmic vesicle</location>
        <location evidence="5">Secretory vesicle</location>
        <location evidence="5">Acrosome</location>
    </subcellularLocation>
</comment>
<comment type="alternative products">
    <event type="alternative splicing"/>
    <isoform>
        <id>Q3ZK22-1</id>
        <name>1</name>
        <name>2.4</name>
        <sequence type="displayed"/>
    </isoform>
    <isoform>
        <id>Q3ZK22-2</id>
        <name>2</name>
        <name>0.8</name>
        <sequence type="described" ref="VSP_035268 VSP_035269 VSP_035270"/>
    </isoform>
    <isoform>
        <id>Q3ZK22-3</id>
        <name>3</name>
        <name>1.9</name>
        <sequence type="described" ref="VSP_035272 VSP_035273"/>
    </isoform>
    <isoform>
        <id>Q3ZK22-4</id>
        <name>4</name>
        <sequence type="described" ref="VSP_035271 VSP_035274"/>
    </isoform>
</comment>
<comment type="tissue specificity">
    <text evidence="5 7">Expressed in developing cochlear hair cells (PubMed:17567809). Isoform 1, isoform 2 and isoform 3 are expressed in testis. In the seminiferous epithelium, present exclusively in the acrosome of spermatids (at protein level).</text>
</comment>
<comment type="developmental stage">
    <text evidence="4">Present in oocytes and at every embryonic stage (at protein level).</text>
</comment>
<comment type="disruption phenotype">
    <text evidence="6">Embryos die at the time of implantation because of a defect in intercellular adhesion.</text>
</comment>
<comment type="similarity">
    <text evidence="11">Belongs to the vezatin family.</text>
</comment>
<organism>
    <name type="scientific">Mus musculus</name>
    <name type="common">Mouse</name>
    <dbReference type="NCBI Taxonomy" id="10090"/>
    <lineage>
        <taxon>Eukaryota</taxon>
        <taxon>Metazoa</taxon>
        <taxon>Chordata</taxon>
        <taxon>Craniata</taxon>
        <taxon>Vertebrata</taxon>
        <taxon>Euteleostomi</taxon>
        <taxon>Mammalia</taxon>
        <taxon>Eutheria</taxon>
        <taxon>Euarchontoglires</taxon>
        <taxon>Glires</taxon>
        <taxon>Rodentia</taxon>
        <taxon>Myomorpha</taxon>
        <taxon>Muroidea</taxon>
        <taxon>Muridae</taxon>
        <taxon>Murinae</taxon>
        <taxon>Mus</taxon>
        <taxon>Mus</taxon>
    </lineage>
</organism>
<gene>
    <name evidence="12" type="primary">Vezt</name>
</gene>
<proteinExistence type="evidence at protein level"/>
<keyword id="KW-0025">Alternative splicing</keyword>
<keyword id="KW-0965">Cell junction</keyword>
<keyword id="KW-1003">Cell membrane</keyword>
<keyword id="KW-0966">Cell projection</keyword>
<keyword id="KW-0175">Coiled coil</keyword>
<keyword id="KW-0968">Cytoplasmic vesicle</keyword>
<keyword id="KW-0217">Developmental protein</keyword>
<keyword id="KW-0472">Membrane</keyword>
<keyword id="KW-0539">Nucleus</keyword>
<keyword id="KW-1185">Reference proteome</keyword>
<keyword id="KW-0812">Transmembrane</keyword>
<keyword id="KW-1133">Transmembrane helix</keyword>
<dbReference type="EMBL" id="AY753561">
    <property type="protein sequence ID" value="AAX12551.1"/>
    <property type="molecule type" value="mRNA"/>
</dbReference>
<dbReference type="EMBL" id="AY753562">
    <property type="protein sequence ID" value="AAX12552.1"/>
    <property type="molecule type" value="mRNA"/>
</dbReference>
<dbReference type="EMBL" id="DQ025533">
    <property type="protein sequence ID" value="AAY87458.1"/>
    <property type="molecule type" value="mRNA"/>
</dbReference>
<dbReference type="EMBL" id="AK036017">
    <property type="protein sequence ID" value="BAC29277.1"/>
    <property type="molecule type" value="mRNA"/>
</dbReference>
<dbReference type="EMBL" id="AK041354">
    <property type="protein sequence ID" value="BAC30915.1"/>
    <property type="molecule type" value="mRNA"/>
</dbReference>
<dbReference type="EMBL" id="AK042540">
    <property type="protein sequence ID" value="BAC31287.1"/>
    <property type="molecule type" value="mRNA"/>
</dbReference>
<dbReference type="EMBL" id="BC056428">
    <property type="protein sequence ID" value="AAH56428.1"/>
    <property type="molecule type" value="mRNA"/>
</dbReference>
<dbReference type="CCDS" id="CCDS36038.1">
    <molecule id="Q3ZK22-1"/>
</dbReference>
<dbReference type="CCDS" id="CCDS78886.1">
    <molecule id="Q3ZK22-3"/>
</dbReference>
<dbReference type="CCDS" id="CCDS83750.1">
    <molecule id="Q3ZK22-4"/>
</dbReference>
<dbReference type="RefSeq" id="NP_001291501.1">
    <molecule id="Q3ZK22-3"/>
    <property type="nucleotide sequence ID" value="NM_001304572.1"/>
</dbReference>
<dbReference type="RefSeq" id="NP_001291504.1">
    <property type="nucleotide sequence ID" value="NM_001304575.1"/>
</dbReference>
<dbReference type="RefSeq" id="NP_001291649.1">
    <molecule id="Q3ZK22-4"/>
    <property type="nucleotide sequence ID" value="NM_001304720.1"/>
</dbReference>
<dbReference type="RefSeq" id="NP_766126.2">
    <molecule id="Q3ZK22-1"/>
    <property type="nucleotide sequence ID" value="NM_172538.5"/>
</dbReference>
<dbReference type="SMR" id="Q3ZK22"/>
<dbReference type="BioGRID" id="229587">
    <property type="interactions" value="6"/>
</dbReference>
<dbReference type="CORUM" id="Q3ZK22"/>
<dbReference type="FunCoup" id="Q3ZK22">
    <property type="interactions" value="3752"/>
</dbReference>
<dbReference type="STRING" id="10090.ENSMUSP00000113715"/>
<dbReference type="GlyGen" id="Q3ZK22">
    <property type="glycosylation" value="1 site"/>
</dbReference>
<dbReference type="iPTMnet" id="Q3ZK22"/>
<dbReference type="PhosphoSitePlus" id="Q3ZK22"/>
<dbReference type="SwissPalm" id="Q3ZK22"/>
<dbReference type="PaxDb" id="10090-ENSMUSP00000037955"/>
<dbReference type="PeptideAtlas" id="Q3ZK22"/>
<dbReference type="ProteomicsDB" id="297976">
    <molecule id="Q3ZK22-1"/>
</dbReference>
<dbReference type="ProteomicsDB" id="297977">
    <molecule id="Q3ZK22-2"/>
</dbReference>
<dbReference type="ProteomicsDB" id="297978">
    <molecule id="Q3ZK22-3"/>
</dbReference>
<dbReference type="ProteomicsDB" id="297979">
    <molecule id="Q3ZK22-4"/>
</dbReference>
<dbReference type="Pumba" id="Q3ZK22"/>
<dbReference type="Antibodypedia" id="1345">
    <property type="antibodies" value="65 antibodies from 23 providers"/>
</dbReference>
<dbReference type="DNASU" id="215008"/>
<dbReference type="Ensembl" id="ENSMUST00000047711.13">
    <molecule id="Q3ZK22-1"/>
    <property type="protein sequence ID" value="ENSMUSP00000037955.7"/>
    <property type="gene ID" value="ENSMUSG00000036099.17"/>
</dbReference>
<dbReference type="Ensembl" id="ENSMUST00000118077.8">
    <molecule id="Q3ZK22-3"/>
    <property type="protein sequence ID" value="ENSMUSP00000113983.2"/>
    <property type="gene ID" value="ENSMUSG00000036099.17"/>
</dbReference>
<dbReference type="Ensembl" id="ENSMUST00000118205.8">
    <molecule id="Q3ZK22-4"/>
    <property type="protein sequence ID" value="ENSMUSP00000113321.2"/>
    <property type="gene ID" value="ENSMUSG00000036099.17"/>
</dbReference>
<dbReference type="Ensembl" id="ENSMUST00000150704.8">
    <molecule id="Q3ZK22-2"/>
    <property type="protein sequence ID" value="ENSMUSP00000121727.2"/>
    <property type="gene ID" value="ENSMUSG00000036099.17"/>
</dbReference>
<dbReference type="GeneID" id="215008"/>
<dbReference type="KEGG" id="mmu:215008"/>
<dbReference type="UCSC" id="uc007gvh.2">
    <molecule id="Q3ZK22-1"/>
    <property type="organism name" value="mouse"/>
</dbReference>
<dbReference type="UCSC" id="uc007gvi.2">
    <molecule id="Q3ZK22-3"/>
    <property type="organism name" value="mouse"/>
</dbReference>
<dbReference type="UCSC" id="uc007gvj.2">
    <molecule id="Q3ZK22-2"/>
    <property type="organism name" value="mouse"/>
</dbReference>
<dbReference type="UCSC" id="uc056yhx.1">
    <molecule id="Q3ZK22-4"/>
    <property type="organism name" value="mouse"/>
</dbReference>
<dbReference type="AGR" id="MGI:2143698"/>
<dbReference type="CTD" id="55591"/>
<dbReference type="MGI" id="MGI:2143698">
    <property type="gene designation" value="Vezt"/>
</dbReference>
<dbReference type="VEuPathDB" id="HostDB:ENSMUSG00000036099"/>
<dbReference type="eggNOG" id="ENOG502QTQW">
    <property type="taxonomic scope" value="Eukaryota"/>
</dbReference>
<dbReference type="GeneTree" id="ENSGT00390000003290"/>
<dbReference type="HOGENOM" id="CLU_019876_2_0_1"/>
<dbReference type="InParanoid" id="Q3ZK22"/>
<dbReference type="OMA" id="IVCENPR"/>
<dbReference type="OrthoDB" id="21151at2759"/>
<dbReference type="PhylomeDB" id="Q3ZK22"/>
<dbReference type="TreeFam" id="TF332269"/>
<dbReference type="BioGRID-ORCS" id="215008">
    <property type="hits" value="14 hits in 64 CRISPR screens"/>
</dbReference>
<dbReference type="ChiTaRS" id="Vezt">
    <property type="organism name" value="mouse"/>
</dbReference>
<dbReference type="PRO" id="PR:Q3ZK22"/>
<dbReference type="Proteomes" id="UP000000589">
    <property type="component" value="Chromosome 10"/>
</dbReference>
<dbReference type="RNAct" id="Q3ZK22">
    <property type="molecule type" value="protein"/>
</dbReference>
<dbReference type="Bgee" id="ENSMUSG00000036099">
    <property type="expression patterns" value="Expressed in superior cervical ganglion and 239 other cell types or tissues"/>
</dbReference>
<dbReference type="ExpressionAtlas" id="Q3ZK22">
    <property type="expression patterns" value="baseline and differential"/>
</dbReference>
<dbReference type="GO" id="GO:0001669">
    <property type="term" value="C:acrosomal vesicle"/>
    <property type="evidence" value="ECO:0007669"/>
    <property type="project" value="UniProtKB-SubCell"/>
</dbReference>
<dbReference type="GO" id="GO:0005912">
    <property type="term" value="C:adherens junction"/>
    <property type="evidence" value="ECO:0007669"/>
    <property type="project" value="UniProtKB-SubCell"/>
</dbReference>
<dbReference type="GO" id="GO:0098978">
    <property type="term" value="C:glutamatergic synapse"/>
    <property type="evidence" value="ECO:0000314"/>
    <property type="project" value="SynGO"/>
</dbReference>
<dbReference type="GO" id="GO:0005634">
    <property type="term" value="C:nucleus"/>
    <property type="evidence" value="ECO:0000314"/>
    <property type="project" value="MGI"/>
</dbReference>
<dbReference type="GO" id="GO:0005886">
    <property type="term" value="C:plasma membrane"/>
    <property type="evidence" value="ECO:0000314"/>
    <property type="project" value="MGI"/>
</dbReference>
<dbReference type="GO" id="GO:0098794">
    <property type="term" value="C:postsynapse"/>
    <property type="evidence" value="ECO:0000314"/>
    <property type="project" value="SynGO"/>
</dbReference>
<dbReference type="GO" id="GO:0002142">
    <property type="term" value="C:stereocilia ankle link complex"/>
    <property type="evidence" value="ECO:0000314"/>
    <property type="project" value="MGI"/>
</dbReference>
<dbReference type="GO" id="GO:0060171">
    <property type="term" value="C:stereocilium membrane"/>
    <property type="evidence" value="ECO:0007669"/>
    <property type="project" value="UniProtKB-SubCell"/>
</dbReference>
<dbReference type="GO" id="GO:0017022">
    <property type="term" value="F:myosin binding"/>
    <property type="evidence" value="ECO:0007669"/>
    <property type="project" value="InterPro"/>
</dbReference>
<dbReference type="GO" id="GO:0098609">
    <property type="term" value="P:cell-cell adhesion"/>
    <property type="evidence" value="ECO:0000315"/>
    <property type="project" value="MGI"/>
</dbReference>
<dbReference type="GO" id="GO:0043009">
    <property type="term" value="P:chordate embryonic development"/>
    <property type="evidence" value="ECO:0000315"/>
    <property type="project" value="MGI"/>
</dbReference>
<dbReference type="GO" id="GO:0060074">
    <property type="term" value="P:synapse maturation"/>
    <property type="evidence" value="ECO:0000314"/>
    <property type="project" value="SynGO"/>
</dbReference>
<dbReference type="InterPro" id="IPR026859">
    <property type="entry name" value="Myosin-bd"/>
</dbReference>
<dbReference type="InterPro" id="IPR026858">
    <property type="entry name" value="Vezatin"/>
</dbReference>
<dbReference type="PANTHER" id="PTHR15989">
    <property type="entry name" value="VEZATIN"/>
    <property type="match status" value="1"/>
</dbReference>
<dbReference type="PANTHER" id="PTHR15989:SF5">
    <property type="entry name" value="VEZATIN"/>
    <property type="match status" value="1"/>
</dbReference>
<dbReference type="Pfam" id="PF12632">
    <property type="entry name" value="Vezatin"/>
    <property type="match status" value="1"/>
</dbReference>
<protein>
    <recommendedName>
        <fullName evidence="11">Vezatin</fullName>
    </recommendedName>
</protein>
<reference key="1">
    <citation type="journal article" date="2005" name="Dev. Biol.">
        <title>Vezatin, an ubiquitous adherens junction protein, is required for mouse blastocyst morphogenesis.</title>
        <authorList>
            <person name="Hyenne V."/>
            <person name="Louvet-Vallee S."/>
            <person name="El-Amraoui A."/>
            <person name="Petit C."/>
            <person name="Maro B."/>
            <person name="Simmler M.-C."/>
        </authorList>
    </citation>
    <scope>NUCLEOTIDE SEQUENCE [MRNA] (ISOFORMS 1 AND 3)</scope>
    <scope>DEVELOPMENTAL STAGE</scope>
    <scope>SUBCELLULAR LOCATION</scope>
    <scope>FUNCTION</scope>
    <source>
        <strain>129S2/SvPas</strain>
    </source>
</reference>
<reference key="2">
    <citation type="journal article" date="2007" name="Mech. Dev.">
        <title>Conditional knock-out reveals that zygotic vezatin-null mouse embryos die at implantation.</title>
        <authorList>
            <person name="Hyenne V."/>
            <person name="Souilhol C."/>
            <person name="Cohen-Tannoudji M."/>
            <person name="Cereghini S."/>
            <person name="Petit C."/>
            <person name="Langa F."/>
            <person name="Maro B."/>
            <person name="Simmler M.-C."/>
        </authorList>
    </citation>
    <scope>NUCLEOTIDE SEQUENCE [MRNA] (ISOFORM 2)</scope>
    <scope>DISRUPTION PHENOTYPE</scope>
    <scope>FUNCTION</scope>
    <source>
        <strain>129S2/SvPas</strain>
    </source>
</reference>
<reference key="3">
    <citation type="journal article" date="2005" name="Science">
        <title>The transcriptional landscape of the mammalian genome.</title>
        <authorList>
            <person name="Carninci P."/>
            <person name="Kasukawa T."/>
            <person name="Katayama S."/>
            <person name="Gough J."/>
            <person name="Frith M.C."/>
            <person name="Maeda N."/>
            <person name="Oyama R."/>
            <person name="Ravasi T."/>
            <person name="Lenhard B."/>
            <person name="Wells C."/>
            <person name="Kodzius R."/>
            <person name="Shimokawa K."/>
            <person name="Bajic V.B."/>
            <person name="Brenner S.E."/>
            <person name="Batalov S."/>
            <person name="Forrest A.R."/>
            <person name="Zavolan M."/>
            <person name="Davis M.J."/>
            <person name="Wilming L.G."/>
            <person name="Aidinis V."/>
            <person name="Allen J.E."/>
            <person name="Ambesi-Impiombato A."/>
            <person name="Apweiler R."/>
            <person name="Aturaliya R.N."/>
            <person name="Bailey T.L."/>
            <person name="Bansal M."/>
            <person name="Baxter L."/>
            <person name="Beisel K.W."/>
            <person name="Bersano T."/>
            <person name="Bono H."/>
            <person name="Chalk A.M."/>
            <person name="Chiu K.P."/>
            <person name="Choudhary V."/>
            <person name="Christoffels A."/>
            <person name="Clutterbuck D.R."/>
            <person name="Crowe M.L."/>
            <person name="Dalla E."/>
            <person name="Dalrymple B.P."/>
            <person name="de Bono B."/>
            <person name="Della Gatta G."/>
            <person name="di Bernardo D."/>
            <person name="Down T."/>
            <person name="Engstrom P."/>
            <person name="Fagiolini M."/>
            <person name="Faulkner G."/>
            <person name="Fletcher C.F."/>
            <person name="Fukushima T."/>
            <person name="Furuno M."/>
            <person name="Futaki S."/>
            <person name="Gariboldi M."/>
            <person name="Georgii-Hemming P."/>
            <person name="Gingeras T.R."/>
            <person name="Gojobori T."/>
            <person name="Green R.E."/>
            <person name="Gustincich S."/>
            <person name="Harbers M."/>
            <person name="Hayashi Y."/>
            <person name="Hensch T.K."/>
            <person name="Hirokawa N."/>
            <person name="Hill D."/>
            <person name="Huminiecki L."/>
            <person name="Iacono M."/>
            <person name="Ikeo K."/>
            <person name="Iwama A."/>
            <person name="Ishikawa T."/>
            <person name="Jakt M."/>
            <person name="Kanapin A."/>
            <person name="Katoh M."/>
            <person name="Kawasawa Y."/>
            <person name="Kelso J."/>
            <person name="Kitamura H."/>
            <person name="Kitano H."/>
            <person name="Kollias G."/>
            <person name="Krishnan S.P."/>
            <person name="Kruger A."/>
            <person name="Kummerfeld S.K."/>
            <person name="Kurochkin I.V."/>
            <person name="Lareau L.F."/>
            <person name="Lazarevic D."/>
            <person name="Lipovich L."/>
            <person name="Liu J."/>
            <person name="Liuni S."/>
            <person name="McWilliam S."/>
            <person name="Madan Babu M."/>
            <person name="Madera M."/>
            <person name="Marchionni L."/>
            <person name="Matsuda H."/>
            <person name="Matsuzawa S."/>
            <person name="Miki H."/>
            <person name="Mignone F."/>
            <person name="Miyake S."/>
            <person name="Morris K."/>
            <person name="Mottagui-Tabar S."/>
            <person name="Mulder N."/>
            <person name="Nakano N."/>
            <person name="Nakauchi H."/>
            <person name="Ng P."/>
            <person name="Nilsson R."/>
            <person name="Nishiguchi S."/>
            <person name="Nishikawa S."/>
            <person name="Nori F."/>
            <person name="Ohara O."/>
            <person name="Okazaki Y."/>
            <person name="Orlando V."/>
            <person name="Pang K.C."/>
            <person name="Pavan W.J."/>
            <person name="Pavesi G."/>
            <person name="Pesole G."/>
            <person name="Petrovsky N."/>
            <person name="Piazza S."/>
            <person name="Reed J."/>
            <person name="Reid J.F."/>
            <person name="Ring B.Z."/>
            <person name="Ringwald M."/>
            <person name="Rost B."/>
            <person name="Ruan Y."/>
            <person name="Salzberg S.L."/>
            <person name="Sandelin A."/>
            <person name="Schneider C."/>
            <person name="Schoenbach C."/>
            <person name="Sekiguchi K."/>
            <person name="Semple C.A."/>
            <person name="Seno S."/>
            <person name="Sessa L."/>
            <person name="Sheng Y."/>
            <person name="Shibata Y."/>
            <person name="Shimada H."/>
            <person name="Shimada K."/>
            <person name="Silva D."/>
            <person name="Sinclair B."/>
            <person name="Sperling S."/>
            <person name="Stupka E."/>
            <person name="Sugiura K."/>
            <person name="Sultana R."/>
            <person name="Takenaka Y."/>
            <person name="Taki K."/>
            <person name="Tammoja K."/>
            <person name="Tan S.L."/>
            <person name="Tang S."/>
            <person name="Taylor M.S."/>
            <person name="Tegner J."/>
            <person name="Teichmann S.A."/>
            <person name="Ueda H.R."/>
            <person name="van Nimwegen E."/>
            <person name="Verardo R."/>
            <person name="Wei C.L."/>
            <person name="Yagi K."/>
            <person name="Yamanishi H."/>
            <person name="Zabarovsky E."/>
            <person name="Zhu S."/>
            <person name="Zimmer A."/>
            <person name="Hide W."/>
            <person name="Bult C."/>
            <person name="Grimmond S.M."/>
            <person name="Teasdale R.D."/>
            <person name="Liu E.T."/>
            <person name="Brusic V."/>
            <person name="Quackenbush J."/>
            <person name="Wahlestedt C."/>
            <person name="Mattick J.S."/>
            <person name="Hume D.A."/>
            <person name="Kai C."/>
            <person name="Sasaki D."/>
            <person name="Tomaru Y."/>
            <person name="Fukuda S."/>
            <person name="Kanamori-Katayama M."/>
            <person name="Suzuki M."/>
            <person name="Aoki J."/>
            <person name="Arakawa T."/>
            <person name="Iida J."/>
            <person name="Imamura K."/>
            <person name="Itoh M."/>
            <person name="Kato T."/>
            <person name="Kawaji H."/>
            <person name="Kawagashira N."/>
            <person name="Kawashima T."/>
            <person name="Kojima M."/>
            <person name="Kondo S."/>
            <person name="Konno H."/>
            <person name="Nakano K."/>
            <person name="Ninomiya N."/>
            <person name="Nishio T."/>
            <person name="Okada M."/>
            <person name="Plessy C."/>
            <person name="Shibata K."/>
            <person name="Shiraki T."/>
            <person name="Suzuki S."/>
            <person name="Tagami M."/>
            <person name="Waki K."/>
            <person name="Watahiki A."/>
            <person name="Okamura-Oho Y."/>
            <person name="Suzuki H."/>
            <person name="Kawai J."/>
            <person name="Hayashizaki Y."/>
        </authorList>
    </citation>
    <scope>NUCLEOTIDE SEQUENCE [LARGE SCALE MRNA] (ISOFORMS 1; 2 AND 4)</scope>
    <source>
        <strain>C57BL/6J</strain>
        <tissue>Cerebellum</tissue>
        <tissue>Thymus</tissue>
    </source>
</reference>
<reference key="4">
    <citation type="journal article" date="2004" name="Genome Res.">
        <title>The status, quality, and expansion of the NIH full-length cDNA project: the Mammalian Gene Collection (MGC).</title>
        <authorList>
            <consortium name="The MGC Project Team"/>
        </authorList>
    </citation>
    <scope>NUCLEOTIDE SEQUENCE [LARGE SCALE MRNA] (ISOFORM 1)</scope>
    <source>
        <strain>C57BL/6J</strain>
    </source>
</reference>
<reference key="5">
    <citation type="journal article" date="2007" name="J. Neurosci.">
        <title>Molecular characterization of the ankle-link complex in cochlear hair cells and its role in the hair bundle functioning.</title>
        <authorList>
            <person name="Michalski N."/>
            <person name="Michel V."/>
            <person name="Bahloul A."/>
            <person name="Lefevre G."/>
            <person name="Barral J."/>
            <person name="Yagi H."/>
            <person name="Chardenoux S."/>
            <person name="Weil D."/>
            <person name="Martin P."/>
            <person name="Hardelin J.P."/>
            <person name="Sato M."/>
            <person name="Petit C."/>
        </authorList>
    </citation>
    <scope>TISSUE SPECIFICITY</scope>
    <scope>SUBCELLULAR LOCATION</scope>
    <scope>INTERACTION WITH USH2A</scope>
</reference>
<reference key="6">
    <citation type="journal article" date="2007" name="Reproduction">
        <title>Vezatin, a ubiquitous protein of adherens cell-cell junctions, is exclusively expressed in germ cells in mouse testis.</title>
        <authorList>
            <person name="Hyenne V."/>
            <person name="Harf J.C."/>
            <person name="Latz M."/>
            <person name="Maro B."/>
            <person name="Wolfrum U."/>
            <person name="Simmler M.-C."/>
        </authorList>
    </citation>
    <scope>TISSUE SPECIFICITY</scope>
    <scope>SUBCELLULAR LOCATION</scope>
</reference>
<name>VEZA_MOUSE</name>
<feature type="chain" id="PRO_0000349248" description="Vezatin">
    <location>
        <begin position="1"/>
        <end position="780"/>
    </location>
</feature>
<feature type="transmembrane region" description="Helical" evidence="2">
    <location>
        <begin position="140"/>
        <end position="160"/>
    </location>
</feature>
<feature type="transmembrane region" description="Helical" evidence="2">
    <location>
        <begin position="162"/>
        <end position="182"/>
    </location>
</feature>
<feature type="region of interest" description="Disordered" evidence="3">
    <location>
        <begin position="620"/>
        <end position="718"/>
    </location>
</feature>
<feature type="region of interest" description="Disordered" evidence="3">
    <location>
        <begin position="757"/>
        <end position="780"/>
    </location>
</feature>
<feature type="coiled-coil region" evidence="2">
    <location>
        <begin position="430"/>
        <end position="467"/>
    </location>
</feature>
<feature type="compositionally biased region" description="Polar residues" evidence="3">
    <location>
        <begin position="624"/>
        <end position="643"/>
    </location>
</feature>
<feature type="compositionally biased region" description="Basic and acidic residues" evidence="3">
    <location>
        <begin position="647"/>
        <end position="663"/>
    </location>
</feature>
<feature type="compositionally biased region" description="Basic and acidic residues" evidence="3">
    <location>
        <begin position="690"/>
        <end position="699"/>
    </location>
</feature>
<feature type="compositionally biased region" description="Low complexity" evidence="3">
    <location>
        <begin position="702"/>
        <end position="711"/>
    </location>
</feature>
<feature type="compositionally biased region" description="Acidic residues" evidence="3">
    <location>
        <begin position="761"/>
        <end position="780"/>
    </location>
</feature>
<feature type="splice variant" id="VSP_035268" description="In isoform 2." evidence="8 10">
    <original>SAACSFNKAAQHPGQHLIGLRKAVYRTVRANFQAARLATLYMLKNYPLNSESDNVTNYICVVPFKELGL</original>
    <variation>LLR</variation>
    <location>
        <begin position="239"/>
        <end position="307"/>
    </location>
</feature>
<feature type="splice variant" id="VSP_035269" description="In isoform 2." evidence="8 10">
    <original>EDQISEEEARNLTDGFSLPALKVLFQLWVAQS</original>
    <variation>DEWLCAQPVLRQVYQMLGLVSFLTFTHIMDLT</variation>
    <location>
        <begin position="311"/>
        <end position="342"/>
    </location>
</feature>
<feature type="splice variant" id="VSP_035270" description="In isoform 2." evidence="8 10">
    <location>
        <begin position="343"/>
        <end position="780"/>
    </location>
</feature>
<feature type="splice variant" id="VSP_035271" description="In isoform 4." evidence="8">
    <original>AVLTSLSPVDPVESVSNSEPPMNSDTEKV</original>
    <variation>EWTFNWIHHAGHGGTVIPARWLRQGGSGV</variation>
    <location>
        <begin position="611"/>
        <end position="639"/>
    </location>
</feature>
<feature type="splice variant" id="VSP_035272" description="In isoform 3." evidence="9">
    <original>AVLTSLS</original>
    <variation>GVKAEWN</variation>
    <location>
        <begin position="611"/>
        <end position="617"/>
    </location>
</feature>
<feature type="splice variant" id="VSP_035273" description="In isoform 3." evidence="9">
    <location>
        <begin position="618"/>
        <end position="780"/>
    </location>
</feature>
<feature type="splice variant" id="VSP_035274" description="In isoform 4." evidence="8">
    <location>
        <begin position="640"/>
        <end position="780"/>
    </location>
</feature>
<feature type="sequence conflict" description="In Ref. 1; AAX12552/AAX12551 and 2; AAY87458." evidence="11" ref="1 2">
    <original>R</original>
    <variation>K</variation>
    <location>
        <position position="57"/>
    </location>
</feature>
<feature type="sequence conflict" description="In Ref. 1; AAX12552/AAX12551 and 2; AAY87458." evidence="11" ref="1 2">
    <original>S</original>
    <variation>P</variation>
    <location>
        <position position="74"/>
    </location>
</feature>
<feature type="sequence conflict" description="In Ref. 1; AAX12552/AAX12551 and 2; AAY87458." evidence="11" ref="1 2">
    <original>F</original>
    <variation>L</variation>
    <location>
        <position position="177"/>
    </location>
</feature>
<feature type="sequence conflict" description="In Ref. 1; AAX12552." evidence="11" ref="1">
    <original>S</original>
    <variation>T</variation>
    <location>
        <position position="358"/>
    </location>
</feature>
<feature type="sequence conflict" description="In Ref. 1; AAX12552/AAX12551." evidence="11" ref="1">
    <original>D</original>
    <variation>E</variation>
    <location>
        <position position="390"/>
    </location>
</feature>